<accession>Q9ZLT0</accession>
<dbReference type="EC" id="5.1.1.3" evidence="2 3 4 5"/>
<dbReference type="EMBL" id="AE001439">
    <property type="protein sequence ID" value="AAD06074.1"/>
    <property type="molecule type" value="Genomic_DNA"/>
</dbReference>
<dbReference type="PIR" id="C71924">
    <property type="entry name" value="C71924"/>
</dbReference>
<dbReference type="RefSeq" id="WP_000690367.1">
    <property type="nucleotide sequence ID" value="NC_000921.1"/>
</dbReference>
<dbReference type="PDB" id="2JFX">
    <property type="method" value="X-ray"/>
    <property type="resolution" value="2.30 A"/>
    <property type="chains" value="A/B=1-255"/>
</dbReference>
<dbReference type="PDB" id="2JFY">
    <property type="method" value="X-ray"/>
    <property type="resolution" value="1.90 A"/>
    <property type="chains" value="A/B=1-255"/>
</dbReference>
<dbReference type="PDB" id="2JFZ">
    <property type="method" value="X-ray"/>
    <property type="resolution" value="1.86 A"/>
    <property type="chains" value="A/B=1-255"/>
</dbReference>
<dbReference type="PDB" id="2W4I">
    <property type="method" value="X-ray"/>
    <property type="resolution" value="1.87 A"/>
    <property type="chains" value="A/B/E/F=1-255"/>
</dbReference>
<dbReference type="PDB" id="4B1F">
    <property type="method" value="X-ray"/>
    <property type="resolution" value="2.05 A"/>
    <property type="chains" value="A/B=1-255"/>
</dbReference>
<dbReference type="PDB" id="8TBA">
    <property type="method" value="X-ray"/>
    <property type="resolution" value="1.65 A"/>
    <property type="chains" value="A/B=1-255"/>
</dbReference>
<dbReference type="PDB" id="8UDI">
    <property type="method" value="X-ray"/>
    <property type="resolution" value="2.10 A"/>
    <property type="chains" value="A/B=1-254"/>
</dbReference>
<dbReference type="PDBsum" id="2JFX"/>
<dbReference type="PDBsum" id="2JFY"/>
<dbReference type="PDBsum" id="2JFZ"/>
<dbReference type="PDBsum" id="2W4I"/>
<dbReference type="PDBsum" id="4B1F"/>
<dbReference type="PDBsum" id="8TBA"/>
<dbReference type="PDBsum" id="8UDI"/>
<dbReference type="SMR" id="Q9ZLT0"/>
<dbReference type="DIP" id="DIP-60299N"/>
<dbReference type="BindingDB" id="Q9ZLT0"/>
<dbReference type="ChEMBL" id="CHEMBL5185"/>
<dbReference type="DrugBank" id="DB08698">
    <property type="generic name" value="1-[(3S)-5-PHENYL-3-THIOPHEN-2-YL-3H-1,4-BENZODIAZEPIN-2-YL]AZETIDIN-3-OL"/>
</dbReference>
<dbReference type="KEGG" id="hpj:jhp_0496"/>
<dbReference type="PATRIC" id="fig|85963.30.peg.500"/>
<dbReference type="eggNOG" id="COG0796">
    <property type="taxonomic scope" value="Bacteria"/>
</dbReference>
<dbReference type="BRENDA" id="5.1.1.3">
    <property type="organism ID" value="2604"/>
</dbReference>
<dbReference type="UniPathway" id="UPA00219"/>
<dbReference type="EvolutionaryTrace" id="Q9ZLT0"/>
<dbReference type="Proteomes" id="UP000000804">
    <property type="component" value="Chromosome"/>
</dbReference>
<dbReference type="GO" id="GO:0008881">
    <property type="term" value="F:glutamate racemase activity"/>
    <property type="evidence" value="ECO:0007669"/>
    <property type="project" value="UniProtKB-UniRule"/>
</dbReference>
<dbReference type="GO" id="GO:0042802">
    <property type="term" value="F:identical protein binding"/>
    <property type="evidence" value="ECO:0000353"/>
    <property type="project" value="IntAct"/>
</dbReference>
<dbReference type="GO" id="GO:0071555">
    <property type="term" value="P:cell wall organization"/>
    <property type="evidence" value="ECO:0007669"/>
    <property type="project" value="UniProtKB-KW"/>
</dbReference>
<dbReference type="GO" id="GO:0009252">
    <property type="term" value="P:peptidoglycan biosynthetic process"/>
    <property type="evidence" value="ECO:0007669"/>
    <property type="project" value="UniProtKB-UniRule"/>
</dbReference>
<dbReference type="GO" id="GO:0008360">
    <property type="term" value="P:regulation of cell shape"/>
    <property type="evidence" value="ECO:0007669"/>
    <property type="project" value="UniProtKB-KW"/>
</dbReference>
<dbReference type="FunFam" id="3.40.50.1860:FF:000001">
    <property type="entry name" value="Glutamate racemase"/>
    <property type="match status" value="1"/>
</dbReference>
<dbReference type="Gene3D" id="3.40.50.1860">
    <property type="match status" value="2"/>
</dbReference>
<dbReference type="HAMAP" id="MF_00258">
    <property type="entry name" value="Glu_racemase"/>
    <property type="match status" value="1"/>
</dbReference>
<dbReference type="InterPro" id="IPR015942">
    <property type="entry name" value="Asp/Glu/hydantoin_racemase"/>
</dbReference>
<dbReference type="InterPro" id="IPR001920">
    <property type="entry name" value="Asp/Glu_race"/>
</dbReference>
<dbReference type="InterPro" id="IPR018187">
    <property type="entry name" value="Asp/Glu_racemase_AS_1"/>
</dbReference>
<dbReference type="InterPro" id="IPR033134">
    <property type="entry name" value="Asp/Glu_racemase_AS_2"/>
</dbReference>
<dbReference type="InterPro" id="IPR004391">
    <property type="entry name" value="Glu_race"/>
</dbReference>
<dbReference type="NCBIfam" id="TIGR00067">
    <property type="entry name" value="glut_race"/>
    <property type="match status" value="1"/>
</dbReference>
<dbReference type="PANTHER" id="PTHR21198">
    <property type="entry name" value="GLUTAMATE RACEMASE"/>
    <property type="match status" value="1"/>
</dbReference>
<dbReference type="PANTHER" id="PTHR21198:SF2">
    <property type="entry name" value="GLUTAMATE RACEMASE"/>
    <property type="match status" value="1"/>
</dbReference>
<dbReference type="Pfam" id="PF01177">
    <property type="entry name" value="Asp_Glu_race"/>
    <property type="match status" value="1"/>
</dbReference>
<dbReference type="SUPFAM" id="SSF53681">
    <property type="entry name" value="Aspartate/glutamate racemase"/>
    <property type="match status" value="2"/>
</dbReference>
<dbReference type="PROSITE" id="PS00923">
    <property type="entry name" value="ASP_GLU_RACEMASE_1"/>
    <property type="match status" value="1"/>
</dbReference>
<dbReference type="PROSITE" id="PS00924">
    <property type="entry name" value="ASP_GLU_RACEMASE_2"/>
    <property type="match status" value="1"/>
</dbReference>
<proteinExistence type="evidence at protein level"/>
<organism>
    <name type="scientific">Helicobacter pylori (strain J99 / ATCC 700824)</name>
    <name type="common">Campylobacter pylori J99</name>
    <dbReference type="NCBI Taxonomy" id="85963"/>
    <lineage>
        <taxon>Bacteria</taxon>
        <taxon>Pseudomonadati</taxon>
        <taxon>Campylobacterota</taxon>
        <taxon>Epsilonproteobacteria</taxon>
        <taxon>Campylobacterales</taxon>
        <taxon>Helicobacteraceae</taxon>
        <taxon>Helicobacter</taxon>
    </lineage>
</organism>
<reference key="1">
    <citation type="journal article" date="1999" name="Nature">
        <title>Genomic sequence comparison of two unrelated isolates of the human gastric pathogen Helicobacter pylori.</title>
        <authorList>
            <person name="Alm R.A."/>
            <person name="Ling L.-S.L."/>
            <person name="Moir D.T."/>
            <person name="King B.L."/>
            <person name="Brown E.D."/>
            <person name="Doig P.C."/>
            <person name="Smith D.R."/>
            <person name="Noonan B."/>
            <person name="Guild B.C."/>
            <person name="deJonge B.L."/>
            <person name="Carmel G."/>
            <person name="Tummino P.J."/>
            <person name="Caruso A."/>
            <person name="Uria-Nickelsen M."/>
            <person name="Mills D.M."/>
            <person name="Ives C."/>
            <person name="Gibson R."/>
            <person name="Merberg D."/>
            <person name="Mills S.D."/>
            <person name="Jiang Q."/>
            <person name="Taylor D.E."/>
            <person name="Vovis G.F."/>
            <person name="Trust T.J."/>
        </authorList>
    </citation>
    <scope>NUCLEOTIDE SEQUENCE [LARGE SCALE GENOMIC DNA]</scope>
    <source>
        <strain>J99 / ATCC 700824</strain>
    </source>
</reference>
<reference key="2">
    <citation type="journal article" date="2007" name="Nature">
        <title>Exploitation of structural and regulatory diversity in glutamate racemases.</title>
        <authorList>
            <person name="Lundqvist T."/>
            <person name="Fisher S.L."/>
            <person name="Kern G."/>
            <person name="Folmer R.H."/>
            <person name="Xue Y."/>
            <person name="Newton D.T."/>
            <person name="Keating T.A."/>
            <person name="Alm R.A."/>
            <person name="de Jonge B.L."/>
        </authorList>
    </citation>
    <scope>X-RAY CRYSTALLOGRAPHY (1.86 ANGSTROMS) IN COMPLEX WITH SUBSTRATE</scope>
    <scope>CATALYTIC ACTIVITY</scope>
    <scope>SUBUNIT</scope>
    <scope>FUNCTION</scope>
    <scope>PATHWAY</scope>
</reference>
<reference key="3">
    <citation type="journal article" date="2009" name="Bioorg. Med. Chem. Lett.">
        <title>Potent and selective inhibitors of Helicobacter pylori glutamate racemase (MurI): pyridodiazepine amines.</title>
        <authorList>
            <person name="Geng B."/>
            <person name="Basarab G."/>
            <person name="Comita-Prevoir J."/>
            <person name="Gowravaram M."/>
            <person name="Hill P."/>
            <person name="Kiely A."/>
            <person name="Loch J."/>
            <person name="MacPherson L."/>
            <person name="Morningstar M."/>
            <person name="Mullen G."/>
            <person name="Osimboni E."/>
            <person name="Satz A."/>
            <person name="Eyermann C."/>
            <person name="Lundqvist T."/>
        </authorList>
    </citation>
    <scope>X-RAY CRYSTALLOGRAPHY (1.87 ANGSTROMS) IN COMPLEX WITH SUBSTRATE</scope>
    <scope>CATALYTIC ACTIVITY</scope>
    <scope>SUBUNIT</scope>
</reference>
<reference key="4">
    <citation type="journal article" date="2012" name="Bioorg. Med. Chem. Lett.">
        <title>Design of inhibitors of Helicobacter pylori glutamate racemase as selective antibacterial agents: incorporation of imidazoles onto a core pyrazolopyrimidinedione scaffold to improve bioavailability.</title>
        <authorList>
            <person name="Basarab G.S."/>
            <person name="Hill P."/>
            <person name="Eyermann C.J."/>
            <person name="Gowravaram M."/>
            <person name="Kack H."/>
            <person name="Osimoni E."/>
        </authorList>
    </citation>
    <scope>X-RAY CRYSTALLOGRAPHY (2.05 ANGSTROMS) IN COMPLEX WITH SUBSTRATE</scope>
    <scope>CATALYTIC ACTIVITY</scope>
</reference>
<gene>
    <name evidence="2" type="primary">murI</name>
    <name type="synonym">glr</name>
    <name type="ordered locus">jhp_0496</name>
</gene>
<comment type="function">
    <text evidence="2 6">Provides the (R)-glutamate required for cell wall biosynthesis.</text>
</comment>
<comment type="catalytic activity">
    <reaction evidence="2 3 4 5">
        <text>L-glutamate = D-glutamate</text>
        <dbReference type="Rhea" id="RHEA:12813"/>
        <dbReference type="ChEBI" id="CHEBI:29985"/>
        <dbReference type="ChEBI" id="CHEBI:29986"/>
        <dbReference type="EC" id="5.1.1.3"/>
    </reaction>
</comment>
<comment type="pathway">
    <text evidence="2 3">Cell wall biogenesis; peptidoglycan biosynthesis.</text>
</comment>
<comment type="subunit">
    <text evidence="3 4">Homodimer.</text>
</comment>
<comment type="interaction">
    <interactant intactId="EBI-15642574">
        <id>Q9ZLT0</id>
    </interactant>
    <interactant intactId="EBI-15642574">
        <id>Q9ZLT0</id>
        <label>murI</label>
    </interactant>
    <organismsDiffer>false</organismsDiffer>
    <experiments>4</experiments>
</comment>
<comment type="similarity">
    <text evidence="2">Belongs to the aspartate/glutamate racemases family.</text>
</comment>
<feature type="chain" id="PRO_0000095477" description="Glutamate racemase">
    <location>
        <begin position="1"/>
        <end position="255"/>
    </location>
</feature>
<feature type="active site" description="Proton donor/acceptor" evidence="1 2">
    <location>
        <position position="70"/>
    </location>
</feature>
<feature type="active site" description="Proton donor/acceptor" evidence="1 2">
    <location>
        <position position="181"/>
    </location>
</feature>
<feature type="binding site" evidence="2 3 4 5 7 8 9 10 11">
    <location>
        <begin position="7"/>
        <end position="8"/>
    </location>
    <ligand>
        <name>substrate</name>
    </ligand>
</feature>
<feature type="binding site" evidence="2 3 4 5 7 8 9 10 11">
    <location>
        <begin position="39"/>
        <end position="40"/>
    </location>
    <ligand>
        <name>substrate</name>
    </ligand>
</feature>
<feature type="binding site" evidence="2 3 4 5 7 8 9 10 11">
    <location>
        <begin position="71"/>
        <end position="72"/>
    </location>
    <ligand>
        <name>substrate</name>
    </ligand>
</feature>
<feature type="binding site" evidence="2 3 4 5 7 8 9 10 11">
    <location>
        <begin position="182"/>
        <end position="183"/>
    </location>
    <ligand>
        <name>substrate</name>
    </ligand>
</feature>
<feature type="strand" evidence="12">
    <location>
        <begin position="2"/>
        <end position="10"/>
    </location>
</feature>
<feature type="helix" evidence="12">
    <location>
        <begin position="13"/>
        <end position="21"/>
    </location>
</feature>
<feature type="strand" evidence="12">
    <location>
        <begin position="26"/>
        <end position="32"/>
    </location>
</feature>
<feature type="turn" evidence="12">
    <location>
        <begin position="34"/>
        <end position="36"/>
    </location>
</feature>
<feature type="helix" evidence="12">
    <location>
        <begin position="44"/>
        <end position="58"/>
    </location>
</feature>
<feature type="helix" evidence="12">
    <location>
        <begin position="59"/>
        <end position="61"/>
    </location>
</feature>
<feature type="strand" evidence="12">
    <location>
        <begin position="66"/>
        <end position="68"/>
    </location>
</feature>
<feature type="helix" evidence="12">
    <location>
        <begin position="71"/>
        <end position="76"/>
    </location>
</feature>
<feature type="helix" evidence="12">
    <location>
        <begin position="78"/>
        <end position="84"/>
    </location>
</feature>
<feature type="strand" evidence="13">
    <location>
        <begin position="89"/>
        <end position="93"/>
    </location>
</feature>
<feature type="helix" evidence="12">
    <location>
        <begin position="94"/>
        <end position="103"/>
    </location>
</feature>
<feature type="strand" evidence="12">
    <location>
        <begin position="111"/>
        <end position="115"/>
    </location>
</feature>
<feature type="helix" evidence="12">
    <location>
        <begin position="117"/>
        <end position="122"/>
    </location>
</feature>
<feature type="helix" evidence="12">
    <location>
        <begin position="124"/>
        <end position="131"/>
    </location>
</feature>
<feature type="strand" evidence="12">
    <location>
        <begin position="137"/>
        <end position="141"/>
    </location>
</feature>
<feature type="helix" evidence="12">
    <location>
        <begin position="145"/>
        <end position="150"/>
    </location>
</feature>
<feature type="helix" evidence="12">
    <location>
        <begin position="157"/>
        <end position="167"/>
    </location>
</feature>
<feature type="strand" evidence="12">
    <location>
        <begin position="175"/>
        <end position="181"/>
    </location>
</feature>
<feature type="helix" evidence="12">
    <location>
        <begin position="184"/>
        <end position="187"/>
    </location>
</feature>
<feature type="helix" evidence="12">
    <location>
        <begin position="188"/>
        <end position="198"/>
    </location>
</feature>
<feature type="strand" evidence="12">
    <location>
        <begin position="206"/>
        <end position="209"/>
    </location>
</feature>
<feature type="helix" evidence="12">
    <location>
        <begin position="210"/>
        <end position="221"/>
    </location>
</feature>
<feature type="helix" evidence="13">
    <location>
        <begin position="223"/>
        <end position="225"/>
    </location>
</feature>
<feature type="strand" evidence="12">
    <location>
        <begin position="233"/>
        <end position="240"/>
    </location>
</feature>
<feature type="helix" evidence="12">
    <location>
        <begin position="242"/>
        <end position="253"/>
    </location>
</feature>
<evidence type="ECO:0000250" key="1">
    <source>
        <dbReference type="UniProtKB" id="O58403"/>
    </source>
</evidence>
<evidence type="ECO:0000255" key="2">
    <source>
        <dbReference type="HAMAP-Rule" id="MF_00258"/>
    </source>
</evidence>
<evidence type="ECO:0000269" key="3">
    <source>
    </source>
</evidence>
<evidence type="ECO:0000269" key="4">
    <source>
    </source>
</evidence>
<evidence type="ECO:0000269" key="5">
    <source>
    </source>
</evidence>
<evidence type="ECO:0000305" key="6">
    <source>
    </source>
</evidence>
<evidence type="ECO:0007744" key="7">
    <source>
        <dbReference type="PDB" id="2JFX"/>
    </source>
</evidence>
<evidence type="ECO:0007744" key="8">
    <source>
        <dbReference type="PDB" id="2JFY"/>
    </source>
</evidence>
<evidence type="ECO:0007744" key="9">
    <source>
        <dbReference type="PDB" id="2JFZ"/>
    </source>
</evidence>
<evidence type="ECO:0007744" key="10">
    <source>
        <dbReference type="PDB" id="2W4I"/>
    </source>
</evidence>
<evidence type="ECO:0007744" key="11">
    <source>
        <dbReference type="PDB" id="4B1F"/>
    </source>
</evidence>
<evidence type="ECO:0007829" key="12">
    <source>
        <dbReference type="PDB" id="2JFZ"/>
    </source>
</evidence>
<evidence type="ECO:0007829" key="13">
    <source>
        <dbReference type="PDB" id="2W4I"/>
    </source>
</evidence>
<keyword id="KW-0002">3D-structure</keyword>
<keyword id="KW-0133">Cell shape</keyword>
<keyword id="KW-0961">Cell wall biogenesis/degradation</keyword>
<keyword id="KW-0413">Isomerase</keyword>
<keyword id="KW-0573">Peptidoglycan synthesis</keyword>
<protein>
    <recommendedName>
        <fullName evidence="2">Glutamate racemase</fullName>
        <ecNumber evidence="2 3 4 5">5.1.1.3</ecNumber>
    </recommendedName>
</protein>
<sequence>MKIGVFDSGVGGFSVLKSLLKARLFDEIIYYGDSARVPYGTKDPTTIKQFGLEALDFFKPHEIELLIVACNTASALALEEMQKYSKIPIVGVIEPSILAIKRQVEDKNAPILVLGTKATIQSNAYDNALKQQGYLNISHLATSLFVPLIEESILEGELLETCMHYYFTPLEILPEVIILGCTHFPLIAQKIEGYFMGHFALPTPPLLIHSGDAIVEYLQQKYALKNNACTFPKVEFHASGDVIWLERQAKEWLKL</sequence>
<name>MURI_HELPJ</name>